<feature type="chain" id="PRO_0000321795" description="Adenylosuccinate synthetase">
    <location>
        <begin position="1"/>
        <end position="429"/>
    </location>
</feature>
<feature type="active site" description="Proton acceptor" evidence="1">
    <location>
        <position position="13"/>
    </location>
</feature>
<feature type="active site" description="Proton donor" evidence="1">
    <location>
        <position position="41"/>
    </location>
</feature>
<feature type="binding site" evidence="1">
    <location>
        <begin position="12"/>
        <end position="18"/>
    </location>
    <ligand>
        <name>GTP</name>
        <dbReference type="ChEBI" id="CHEBI:37565"/>
    </ligand>
</feature>
<feature type="binding site" description="in other chain" evidence="1">
    <location>
        <begin position="13"/>
        <end position="16"/>
    </location>
    <ligand>
        <name>IMP</name>
        <dbReference type="ChEBI" id="CHEBI:58053"/>
        <note>ligand shared between dimeric partners</note>
    </ligand>
</feature>
<feature type="binding site" evidence="1">
    <location>
        <position position="13"/>
    </location>
    <ligand>
        <name>Mg(2+)</name>
        <dbReference type="ChEBI" id="CHEBI:18420"/>
    </ligand>
</feature>
<feature type="binding site" description="in other chain" evidence="1">
    <location>
        <begin position="38"/>
        <end position="41"/>
    </location>
    <ligand>
        <name>IMP</name>
        <dbReference type="ChEBI" id="CHEBI:58053"/>
        <note>ligand shared between dimeric partners</note>
    </ligand>
</feature>
<feature type="binding site" evidence="1">
    <location>
        <begin position="40"/>
        <end position="42"/>
    </location>
    <ligand>
        <name>GTP</name>
        <dbReference type="ChEBI" id="CHEBI:37565"/>
    </ligand>
</feature>
<feature type="binding site" evidence="1">
    <location>
        <position position="40"/>
    </location>
    <ligand>
        <name>Mg(2+)</name>
        <dbReference type="ChEBI" id="CHEBI:18420"/>
    </ligand>
</feature>
<feature type="binding site" description="in other chain" evidence="1">
    <location>
        <position position="129"/>
    </location>
    <ligand>
        <name>IMP</name>
        <dbReference type="ChEBI" id="CHEBI:58053"/>
        <note>ligand shared between dimeric partners</note>
    </ligand>
</feature>
<feature type="binding site" evidence="1">
    <location>
        <position position="143"/>
    </location>
    <ligand>
        <name>IMP</name>
        <dbReference type="ChEBI" id="CHEBI:58053"/>
        <note>ligand shared between dimeric partners</note>
    </ligand>
</feature>
<feature type="binding site" description="in other chain" evidence="1">
    <location>
        <position position="223"/>
    </location>
    <ligand>
        <name>IMP</name>
        <dbReference type="ChEBI" id="CHEBI:58053"/>
        <note>ligand shared between dimeric partners</note>
    </ligand>
</feature>
<feature type="binding site" description="in other chain" evidence="1">
    <location>
        <position position="238"/>
    </location>
    <ligand>
        <name>IMP</name>
        <dbReference type="ChEBI" id="CHEBI:58053"/>
        <note>ligand shared between dimeric partners</note>
    </ligand>
</feature>
<feature type="binding site" evidence="1">
    <location>
        <begin position="298"/>
        <end position="304"/>
    </location>
    <ligand>
        <name>substrate</name>
    </ligand>
</feature>
<feature type="binding site" description="in other chain" evidence="1">
    <location>
        <position position="302"/>
    </location>
    <ligand>
        <name>IMP</name>
        <dbReference type="ChEBI" id="CHEBI:58053"/>
        <note>ligand shared between dimeric partners</note>
    </ligand>
</feature>
<feature type="binding site" evidence="1">
    <location>
        <position position="304"/>
    </location>
    <ligand>
        <name>GTP</name>
        <dbReference type="ChEBI" id="CHEBI:37565"/>
    </ligand>
</feature>
<feature type="binding site" evidence="1">
    <location>
        <begin position="330"/>
        <end position="332"/>
    </location>
    <ligand>
        <name>GTP</name>
        <dbReference type="ChEBI" id="CHEBI:37565"/>
    </ligand>
</feature>
<feature type="binding site" evidence="1">
    <location>
        <begin position="412"/>
        <end position="414"/>
    </location>
    <ligand>
        <name>GTP</name>
        <dbReference type="ChEBI" id="CHEBI:37565"/>
    </ligand>
</feature>
<accession>A5VS40</accession>
<keyword id="KW-0963">Cytoplasm</keyword>
<keyword id="KW-0342">GTP-binding</keyword>
<keyword id="KW-0436">Ligase</keyword>
<keyword id="KW-0460">Magnesium</keyword>
<keyword id="KW-0479">Metal-binding</keyword>
<keyword id="KW-0547">Nucleotide-binding</keyword>
<keyword id="KW-0658">Purine biosynthesis</keyword>
<proteinExistence type="inferred from homology"/>
<sequence length="429" mass="46560">MANVVVVGSQWGDEGKGKIVDWLSERADVIVRYQGGHNAGHTLVIDGVSYKLSLLPSGLVRGKLSVIGNGVVVDPHHFVAEVEKLRGQGIDVTPDVLRVAENAPLILSIHRELDAMREGSNSGLKIGTTKRGIGPAYEDKVGRRAIRVIDLTEPETLRPKVERLLAHHNSLRRGMGLEEIAVETILTELTSVADQILPYIDQVWRVLDERRKAGARILFEGAQGALLDNDHGTYPFVTSSNTVAGQAAAGSGLGPTAIGYVLGITKAYTTRVGEGPFPTELNDEIGEFLGTKGHEFGVVTGRKRRCGWFDAVIVRQTVRTSGINGIALTKLDVLDGLEEIKICVAYKLDGKRIDYLPSSMGAQARVKPIYETLPGWSETTAGARSWNDLPAQAVKYVRHIEELIGAPVAMLSTSPEREDTILVTDPFHD</sequence>
<name>PURA_BRUO2</name>
<reference key="1">
    <citation type="journal article" date="2009" name="PLoS ONE">
        <title>Genome degradation in Brucella ovis corresponds with narrowing of its host range and tissue tropism.</title>
        <authorList>
            <person name="Tsolis R.M."/>
            <person name="Seshadri R."/>
            <person name="Santos R.L."/>
            <person name="Sangari F.J."/>
            <person name="Lobo J.M."/>
            <person name="de Jong M.F."/>
            <person name="Ren Q."/>
            <person name="Myers G."/>
            <person name="Brinkac L.M."/>
            <person name="Nelson W.C."/>
            <person name="Deboy R.T."/>
            <person name="Angiuoli S."/>
            <person name="Khouri H."/>
            <person name="Dimitrov G."/>
            <person name="Robinson J.R."/>
            <person name="Mulligan S."/>
            <person name="Walker R.L."/>
            <person name="Elzer P.E."/>
            <person name="Hassan K.A."/>
            <person name="Paulsen I.T."/>
        </authorList>
    </citation>
    <scope>NUCLEOTIDE SEQUENCE [LARGE SCALE GENOMIC DNA]</scope>
    <source>
        <strain>ATCC 25840 / 63/290 / NCTC 10512</strain>
    </source>
</reference>
<evidence type="ECO:0000255" key="1">
    <source>
        <dbReference type="HAMAP-Rule" id="MF_00011"/>
    </source>
</evidence>
<evidence type="ECO:0000305" key="2"/>
<comment type="function">
    <text evidence="1">Plays an important role in the de novo pathway of purine nucleotide biosynthesis. Catalyzes the first committed step in the biosynthesis of AMP from IMP.</text>
</comment>
<comment type="catalytic activity">
    <reaction evidence="1">
        <text>IMP + L-aspartate + GTP = N(6)-(1,2-dicarboxyethyl)-AMP + GDP + phosphate + 2 H(+)</text>
        <dbReference type="Rhea" id="RHEA:15753"/>
        <dbReference type="ChEBI" id="CHEBI:15378"/>
        <dbReference type="ChEBI" id="CHEBI:29991"/>
        <dbReference type="ChEBI" id="CHEBI:37565"/>
        <dbReference type="ChEBI" id="CHEBI:43474"/>
        <dbReference type="ChEBI" id="CHEBI:57567"/>
        <dbReference type="ChEBI" id="CHEBI:58053"/>
        <dbReference type="ChEBI" id="CHEBI:58189"/>
        <dbReference type="EC" id="6.3.4.4"/>
    </reaction>
</comment>
<comment type="cofactor">
    <cofactor evidence="1">
        <name>Mg(2+)</name>
        <dbReference type="ChEBI" id="CHEBI:18420"/>
    </cofactor>
    <text evidence="1">Binds 1 Mg(2+) ion per subunit.</text>
</comment>
<comment type="pathway">
    <text evidence="1">Purine metabolism; AMP biosynthesis via de novo pathway; AMP from IMP: step 1/2.</text>
</comment>
<comment type="subunit">
    <text evidence="1">Homodimer.</text>
</comment>
<comment type="subcellular location">
    <subcellularLocation>
        <location evidence="1">Cytoplasm</location>
    </subcellularLocation>
</comment>
<comment type="similarity">
    <text evidence="1">Belongs to the adenylosuccinate synthetase family.</text>
</comment>
<comment type="sequence caution" evidence="2">
    <conflict type="erroneous initiation">
        <sequence resource="EMBL-CDS" id="ABQ60670"/>
    </conflict>
</comment>
<dbReference type="EC" id="6.3.4.4" evidence="1"/>
<dbReference type="EMBL" id="CP000708">
    <property type="protein sequence ID" value="ABQ60670.1"/>
    <property type="status" value="ALT_INIT"/>
    <property type="molecule type" value="Genomic_DNA"/>
</dbReference>
<dbReference type="RefSeq" id="WP_006013577.1">
    <property type="nucleotide sequence ID" value="NC_009505.1"/>
</dbReference>
<dbReference type="SMR" id="A5VS40"/>
<dbReference type="GeneID" id="45124989"/>
<dbReference type="KEGG" id="bov:BOV_1627"/>
<dbReference type="HOGENOM" id="CLU_029848_0_0_5"/>
<dbReference type="PhylomeDB" id="A5VS40"/>
<dbReference type="UniPathway" id="UPA00075">
    <property type="reaction ID" value="UER00335"/>
</dbReference>
<dbReference type="Proteomes" id="UP000006383">
    <property type="component" value="Chromosome I"/>
</dbReference>
<dbReference type="GO" id="GO:0005737">
    <property type="term" value="C:cytoplasm"/>
    <property type="evidence" value="ECO:0007669"/>
    <property type="project" value="UniProtKB-SubCell"/>
</dbReference>
<dbReference type="GO" id="GO:0004019">
    <property type="term" value="F:adenylosuccinate synthase activity"/>
    <property type="evidence" value="ECO:0007669"/>
    <property type="project" value="UniProtKB-UniRule"/>
</dbReference>
<dbReference type="GO" id="GO:0005525">
    <property type="term" value="F:GTP binding"/>
    <property type="evidence" value="ECO:0007669"/>
    <property type="project" value="UniProtKB-UniRule"/>
</dbReference>
<dbReference type="GO" id="GO:0000287">
    <property type="term" value="F:magnesium ion binding"/>
    <property type="evidence" value="ECO:0007669"/>
    <property type="project" value="UniProtKB-UniRule"/>
</dbReference>
<dbReference type="GO" id="GO:0044208">
    <property type="term" value="P:'de novo' AMP biosynthetic process"/>
    <property type="evidence" value="ECO:0007669"/>
    <property type="project" value="UniProtKB-UniRule"/>
</dbReference>
<dbReference type="GO" id="GO:0046040">
    <property type="term" value="P:IMP metabolic process"/>
    <property type="evidence" value="ECO:0007669"/>
    <property type="project" value="TreeGrafter"/>
</dbReference>
<dbReference type="CDD" id="cd03108">
    <property type="entry name" value="AdSS"/>
    <property type="match status" value="1"/>
</dbReference>
<dbReference type="FunFam" id="1.10.300.10:FF:000001">
    <property type="entry name" value="Adenylosuccinate synthetase"/>
    <property type="match status" value="1"/>
</dbReference>
<dbReference type="FunFam" id="3.90.170.10:FF:000001">
    <property type="entry name" value="Adenylosuccinate synthetase"/>
    <property type="match status" value="1"/>
</dbReference>
<dbReference type="Gene3D" id="3.40.440.10">
    <property type="entry name" value="Adenylosuccinate Synthetase, subunit A, domain 1"/>
    <property type="match status" value="1"/>
</dbReference>
<dbReference type="Gene3D" id="1.10.300.10">
    <property type="entry name" value="Adenylosuccinate Synthetase, subunit A, domain 2"/>
    <property type="match status" value="1"/>
</dbReference>
<dbReference type="Gene3D" id="3.90.170.10">
    <property type="entry name" value="Adenylosuccinate Synthetase, subunit A, domain 3"/>
    <property type="match status" value="1"/>
</dbReference>
<dbReference type="HAMAP" id="MF_00011">
    <property type="entry name" value="Adenylosucc_synth"/>
    <property type="match status" value="1"/>
</dbReference>
<dbReference type="InterPro" id="IPR018220">
    <property type="entry name" value="Adenylosuccin_syn_GTP-bd"/>
</dbReference>
<dbReference type="InterPro" id="IPR033128">
    <property type="entry name" value="Adenylosuccin_syn_Lys_AS"/>
</dbReference>
<dbReference type="InterPro" id="IPR042109">
    <property type="entry name" value="Adenylosuccinate_synth_dom1"/>
</dbReference>
<dbReference type="InterPro" id="IPR042110">
    <property type="entry name" value="Adenylosuccinate_synth_dom2"/>
</dbReference>
<dbReference type="InterPro" id="IPR042111">
    <property type="entry name" value="Adenylosuccinate_synth_dom3"/>
</dbReference>
<dbReference type="InterPro" id="IPR001114">
    <property type="entry name" value="Adenylosuccinate_synthetase"/>
</dbReference>
<dbReference type="InterPro" id="IPR027417">
    <property type="entry name" value="P-loop_NTPase"/>
</dbReference>
<dbReference type="NCBIfam" id="NF002223">
    <property type="entry name" value="PRK01117.1"/>
    <property type="match status" value="1"/>
</dbReference>
<dbReference type="NCBIfam" id="TIGR00184">
    <property type="entry name" value="purA"/>
    <property type="match status" value="1"/>
</dbReference>
<dbReference type="PANTHER" id="PTHR11846">
    <property type="entry name" value="ADENYLOSUCCINATE SYNTHETASE"/>
    <property type="match status" value="1"/>
</dbReference>
<dbReference type="PANTHER" id="PTHR11846:SF0">
    <property type="entry name" value="ADENYLOSUCCINATE SYNTHETASE"/>
    <property type="match status" value="1"/>
</dbReference>
<dbReference type="Pfam" id="PF00709">
    <property type="entry name" value="Adenylsucc_synt"/>
    <property type="match status" value="1"/>
</dbReference>
<dbReference type="SMART" id="SM00788">
    <property type="entry name" value="Adenylsucc_synt"/>
    <property type="match status" value="1"/>
</dbReference>
<dbReference type="SUPFAM" id="SSF52540">
    <property type="entry name" value="P-loop containing nucleoside triphosphate hydrolases"/>
    <property type="match status" value="1"/>
</dbReference>
<dbReference type="PROSITE" id="PS01266">
    <property type="entry name" value="ADENYLOSUCCIN_SYN_1"/>
    <property type="match status" value="1"/>
</dbReference>
<dbReference type="PROSITE" id="PS00513">
    <property type="entry name" value="ADENYLOSUCCIN_SYN_2"/>
    <property type="match status" value="1"/>
</dbReference>
<organism>
    <name type="scientific">Brucella ovis (strain ATCC 25840 / 63/290 / NCTC 10512)</name>
    <dbReference type="NCBI Taxonomy" id="444178"/>
    <lineage>
        <taxon>Bacteria</taxon>
        <taxon>Pseudomonadati</taxon>
        <taxon>Pseudomonadota</taxon>
        <taxon>Alphaproteobacteria</taxon>
        <taxon>Hyphomicrobiales</taxon>
        <taxon>Brucellaceae</taxon>
        <taxon>Brucella/Ochrobactrum group</taxon>
        <taxon>Brucella</taxon>
    </lineage>
</organism>
<protein>
    <recommendedName>
        <fullName evidence="1">Adenylosuccinate synthetase</fullName>
        <shortName evidence="1">AMPSase</shortName>
        <shortName evidence="1">AdSS</shortName>
        <ecNumber evidence="1">6.3.4.4</ecNumber>
    </recommendedName>
    <alternativeName>
        <fullName evidence="1">IMP--aspartate ligase</fullName>
    </alternativeName>
</protein>
<gene>
    <name evidence="1" type="primary">purA</name>
    <name type="ordered locus">BOV_1627</name>
</gene>